<dbReference type="EC" id="6.1.1.16" evidence="1"/>
<dbReference type="EMBL" id="CP000518">
    <property type="protein sequence ID" value="ABL94013.1"/>
    <property type="molecule type" value="Genomic_DNA"/>
</dbReference>
<dbReference type="SMR" id="A1UMF5"/>
<dbReference type="STRING" id="189918.Mkms_4823"/>
<dbReference type="KEGG" id="mkm:Mkms_4823"/>
<dbReference type="HOGENOM" id="CLU_013528_0_1_11"/>
<dbReference type="OrthoDB" id="9815130at2"/>
<dbReference type="GO" id="GO:0005829">
    <property type="term" value="C:cytosol"/>
    <property type="evidence" value="ECO:0007669"/>
    <property type="project" value="TreeGrafter"/>
</dbReference>
<dbReference type="GO" id="GO:0005524">
    <property type="term" value="F:ATP binding"/>
    <property type="evidence" value="ECO:0007669"/>
    <property type="project" value="UniProtKB-UniRule"/>
</dbReference>
<dbReference type="GO" id="GO:0004817">
    <property type="term" value="F:cysteine-tRNA ligase activity"/>
    <property type="evidence" value="ECO:0007669"/>
    <property type="project" value="UniProtKB-UniRule"/>
</dbReference>
<dbReference type="GO" id="GO:0008270">
    <property type="term" value="F:zinc ion binding"/>
    <property type="evidence" value="ECO:0007669"/>
    <property type="project" value="UniProtKB-UniRule"/>
</dbReference>
<dbReference type="GO" id="GO:0006423">
    <property type="term" value="P:cysteinyl-tRNA aminoacylation"/>
    <property type="evidence" value="ECO:0007669"/>
    <property type="project" value="UniProtKB-UniRule"/>
</dbReference>
<dbReference type="CDD" id="cd00672">
    <property type="entry name" value="CysRS_core"/>
    <property type="match status" value="1"/>
</dbReference>
<dbReference type="FunFam" id="3.40.50.620:FF:000068">
    <property type="entry name" value="Cysteine--tRNA ligase"/>
    <property type="match status" value="1"/>
</dbReference>
<dbReference type="Gene3D" id="1.20.120.1910">
    <property type="entry name" value="Cysteine-tRNA ligase, C-terminal anti-codon recognition domain"/>
    <property type="match status" value="1"/>
</dbReference>
<dbReference type="Gene3D" id="3.40.50.620">
    <property type="entry name" value="HUPs"/>
    <property type="match status" value="1"/>
</dbReference>
<dbReference type="HAMAP" id="MF_00041">
    <property type="entry name" value="Cys_tRNA_synth"/>
    <property type="match status" value="1"/>
</dbReference>
<dbReference type="InterPro" id="IPR015803">
    <property type="entry name" value="Cys-tRNA-ligase"/>
</dbReference>
<dbReference type="InterPro" id="IPR015273">
    <property type="entry name" value="Cys-tRNA-synt_Ia_DALR"/>
</dbReference>
<dbReference type="InterPro" id="IPR024909">
    <property type="entry name" value="Cys-tRNA/MSH_ligase"/>
</dbReference>
<dbReference type="InterPro" id="IPR056411">
    <property type="entry name" value="CysS_C"/>
</dbReference>
<dbReference type="InterPro" id="IPR014729">
    <property type="entry name" value="Rossmann-like_a/b/a_fold"/>
</dbReference>
<dbReference type="InterPro" id="IPR032678">
    <property type="entry name" value="tRNA-synt_1_cat_dom"/>
</dbReference>
<dbReference type="InterPro" id="IPR009080">
    <property type="entry name" value="tRNAsynth_Ia_anticodon-bd"/>
</dbReference>
<dbReference type="NCBIfam" id="TIGR00435">
    <property type="entry name" value="cysS"/>
    <property type="match status" value="1"/>
</dbReference>
<dbReference type="PANTHER" id="PTHR10890:SF30">
    <property type="entry name" value="CYSTEINE--TRNA LIGASE"/>
    <property type="match status" value="1"/>
</dbReference>
<dbReference type="PANTHER" id="PTHR10890">
    <property type="entry name" value="CYSTEINYL-TRNA SYNTHETASE"/>
    <property type="match status" value="1"/>
</dbReference>
<dbReference type="Pfam" id="PF23493">
    <property type="entry name" value="CysS_C"/>
    <property type="match status" value="1"/>
</dbReference>
<dbReference type="Pfam" id="PF01406">
    <property type="entry name" value="tRNA-synt_1e"/>
    <property type="match status" value="1"/>
</dbReference>
<dbReference type="PRINTS" id="PR00983">
    <property type="entry name" value="TRNASYNTHCYS"/>
</dbReference>
<dbReference type="SMART" id="SM00840">
    <property type="entry name" value="DALR_2"/>
    <property type="match status" value="1"/>
</dbReference>
<dbReference type="SUPFAM" id="SSF47323">
    <property type="entry name" value="Anticodon-binding domain of a subclass of class I aminoacyl-tRNA synthetases"/>
    <property type="match status" value="1"/>
</dbReference>
<dbReference type="SUPFAM" id="SSF52374">
    <property type="entry name" value="Nucleotidylyl transferase"/>
    <property type="match status" value="1"/>
</dbReference>
<protein>
    <recommendedName>
        <fullName evidence="1">Cysteine--tRNA ligase</fullName>
        <ecNumber evidence="1">6.1.1.16</ecNumber>
    </recommendedName>
    <alternativeName>
        <fullName evidence="1">Cysteinyl-tRNA synthetase</fullName>
        <shortName evidence="1">CysRS</shortName>
    </alternativeName>
</protein>
<feature type="chain" id="PRO_0000332856" description="Cysteine--tRNA ligase">
    <location>
        <begin position="1"/>
        <end position="481"/>
    </location>
</feature>
<feature type="short sequence motif" description="'HIGH' region">
    <location>
        <begin position="45"/>
        <end position="55"/>
    </location>
</feature>
<feature type="short sequence motif" description="'KMSKS' region">
    <location>
        <begin position="277"/>
        <end position="281"/>
    </location>
</feature>
<feature type="binding site" evidence="1">
    <location>
        <position position="43"/>
    </location>
    <ligand>
        <name>Zn(2+)</name>
        <dbReference type="ChEBI" id="CHEBI:29105"/>
    </ligand>
</feature>
<feature type="binding site" evidence="1">
    <location>
        <position position="221"/>
    </location>
    <ligand>
        <name>Zn(2+)</name>
        <dbReference type="ChEBI" id="CHEBI:29105"/>
    </ligand>
</feature>
<feature type="binding site" evidence="1">
    <location>
        <position position="246"/>
    </location>
    <ligand>
        <name>Zn(2+)</name>
        <dbReference type="ChEBI" id="CHEBI:29105"/>
    </ligand>
</feature>
<feature type="binding site" evidence="1">
    <location>
        <position position="250"/>
    </location>
    <ligand>
        <name>Zn(2+)</name>
        <dbReference type="ChEBI" id="CHEBI:29105"/>
    </ligand>
</feature>
<feature type="binding site" evidence="1">
    <location>
        <position position="280"/>
    </location>
    <ligand>
        <name>ATP</name>
        <dbReference type="ChEBI" id="CHEBI:30616"/>
    </ligand>
</feature>
<accession>A1UMF5</accession>
<evidence type="ECO:0000255" key="1">
    <source>
        <dbReference type="HAMAP-Rule" id="MF_00041"/>
    </source>
</evidence>
<organism>
    <name type="scientific">Mycobacterium sp. (strain KMS)</name>
    <dbReference type="NCBI Taxonomy" id="189918"/>
    <lineage>
        <taxon>Bacteria</taxon>
        <taxon>Bacillati</taxon>
        <taxon>Actinomycetota</taxon>
        <taxon>Actinomycetes</taxon>
        <taxon>Mycobacteriales</taxon>
        <taxon>Mycobacteriaceae</taxon>
        <taxon>Mycobacterium</taxon>
    </lineage>
</organism>
<proteinExistence type="inferred from homology"/>
<comment type="catalytic activity">
    <reaction evidence="1">
        <text>tRNA(Cys) + L-cysteine + ATP = L-cysteinyl-tRNA(Cys) + AMP + diphosphate</text>
        <dbReference type="Rhea" id="RHEA:17773"/>
        <dbReference type="Rhea" id="RHEA-COMP:9661"/>
        <dbReference type="Rhea" id="RHEA-COMP:9679"/>
        <dbReference type="ChEBI" id="CHEBI:30616"/>
        <dbReference type="ChEBI" id="CHEBI:33019"/>
        <dbReference type="ChEBI" id="CHEBI:35235"/>
        <dbReference type="ChEBI" id="CHEBI:78442"/>
        <dbReference type="ChEBI" id="CHEBI:78517"/>
        <dbReference type="ChEBI" id="CHEBI:456215"/>
        <dbReference type="EC" id="6.1.1.16"/>
    </reaction>
</comment>
<comment type="cofactor">
    <cofactor evidence="1">
        <name>Zn(2+)</name>
        <dbReference type="ChEBI" id="CHEBI:29105"/>
    </cofactor>
    <text evidence="1">Binds 1 zinc ion per subunit.</text>
</comment>
<comment type="subunit">
    <text evidence="1">Monomer.</text>
</comment>
<comment type="subcellular location">
    <subcellularLocation>
        <location evidence="1">Cytoplasm</location>
    </subcellularLocation>
</comment>
<comment type="similarity">
    <text evidence="1">Belongs to the class-I aminoacyl-tRNA synthetase family.</text>
</comment>
<reference key="1">
    <citation type="submission" date="2006-12" db="EMBL/GenBank/DDBJ databases">
        <title>Complete sequence of chromosome of Mycobacterium sp. KMS.</title>
        <authorList>
            <consortium name="US DOE Joint Genome Institute"/>
            <person name="Copeland A."/>
            <person name="Lucas S."/>
            <person name="Lapidus A."/>
            <person name="Barry K."/>
            <person name="Detter J.C."/>
            <person name="Glavina del Rio T."/>
            <person name="Hammon N."/>
            <person name="Israni S."/>
            <person name="Dalin E."/>
            <person name="Tice H."/>
            <person name="Pitluck S."/>
            <person name="Kiss H."/>
            <person name="Brettin T."/>
            <person name="Bruce D."/>
            <person name="Han C."/>
            <person name="Tapia R."/>
            <person name="Gilna P."/>
            <person name="Schmutz J."/>
            <person name="Larimer F."/>
            <person name="Land M."/>
            <person name="Hauser L."/>
            <person name="Kyrpides N."/>
            <person name="Mikhailova N."/>
            <person name="Miller C.D."/>
            <person name="Richardson P."/>
        </authorList>
    </citation>
    <scope>NUCLEOTIDE SEQUENCE [LARGE SCALE GENOMIC DNA]</scope>
    <source>
        <strain>KMS</strain>
    </source>
</reference>
<name>SYC_MYCSK</name>
<sequence>MTDRADADRPATSPTGLRLYDTMTGAVRDFVPLRDGHVSIYLCGATVQGLPHIGHVRSGVAFDVLRRWLTAKGLDVAFIRNVTDIDDKILNKAADAGRPWWEWAATYERAFSAAYDALGVLPPSAEPRATGHITQMVELIERLIDRGHAYTGDGDVYFNVATLPDYGKLSGHRIDDVHQGEGVATGKRDQRDFTLWKGAKPGEPSWPTPWGRGRPGWHTECVAMCEAYLGAEFDIHAGGMDLVFPHHENEIAQAEAAGDGFARFWLHNGWVTMGGEKMSKSLGNVLSIPAVLQRVRAAELRYYLGSAHYRSMLEFSETALQDAVKAYAGVEDFLHRVRTRVGTVVPGDWTPKFAAALDDDLSVPIALAEVHAARAVGNRALDSGDHETAMTQARSIRAMMGILGCDPLDERWESRDETSAALAAIDVLVRWALDSRADARNRKDWATADQIRDRLKEAGIEVTDTADGPQWSLLDGDSKDV</sequence>
<gene>
    <name evidence="1" type="primary">cysS</name>
    <name type="ordered locus">Mkms_4823</name>
</gene>
<keyword id="KW-0030">Aminoacyl-tRNA synthetase</keyword>
<keyword id="KW-0067">ATP-binding</keyword>
<keyword id="KW-0963">Cytoplasm</keyword>
<keyword id="KW-0436">Ligase</keyword>
<keyword id="KW-0479">Metal-binding</keyword>
<keyword id="KW-0547">Nucleotide-binding</keyword>
<keyword id="KW-0648">Protein biosynthesis</keyword>
<keyword id="KW-0862">Zinc</keyword>